<proteinExistence type="evidence at protein level"/>
<protein>
    <recommendedName>
        <fullName>Uncharacterized vacuolar membrane protein YML018C</fullName>
    </recommendedName>
</protein>
<name>YMB8_YEAST</name>
<evidence type="ECO:0000255" key="1"/>
<evidence type="ECO:0000269" key="2">
    <source>
    </source>
</evidence>
<evidence type="ECO:0000269" key="3">
    <source>
    </source>
</evidence>
<evidence type="ECO:0000305" key="4"/>
<evidence type="ECO:0007744" key="5">
    <source>
    </source>
</evidence>
<dbReference type="EMBL" id="Z46659">
    <property type="protein sequence ID" value="CAA86637.1"/>
    <property type="molecule type" value="Genomic_DNA"/>
</dbReference>
<dbReference type="EMBL" id="AY692723">
    <property type="protein sequence ID" value="AAT92742.1"/>
    <property type="molecule type" value="Genomic_DNA"/>
</dbReference>
<dbReference type="EMBL" id="BK006946">
    <property type="protein sequence ID" value="DAA09880.1"/>
    <property type="molecule type" value="Genomic_DNA"/>
</dbReference>
<dbReference type="PIR" id="S49759">
    <property type="entry name" value="S49759"/>
</dbReference>
<dbReference type="RefSeq" id="NP_013694.1">
    <property type="nucleotide sequence ID" value="NM_001182376.1"/>
</dbReference>
<dbReference type="SMR" id="Q03730"/>
<dbReference type="BioGRID" id="35151">
    <property type="interactions" value="53"/>
</dbReference>
<dbReference type="DIP" id="DIP-4953N"/>
<dbReference type="FunCoup" id="Q03730">
    <property type="interactions" value="502"/>
</dbReference>
<dbReference type="IntAct" id="Q03730">
    <property type="interactions" value="29"/>
</dbReference>
<dbReference type="MINT" id="Q03730"/>
<dbReference type="STRING" id="4932.YML018C"/>
<dbReference type="TCDB" id="2.A.7.24.5">
    <property type="family name" value="the drug/metabolite transporter (dmt) superfamily"/>
</dbReference>
<dbReference type="iPTMnet" id="Q03730"/>
<dbReference type="PaxDb" id="4932-YML018C"/>
<dbReference type="PeptideAtlas" id="Q03730"/>
<dbReference type="EnsemblFungi" id="YML018C_mRNA">
    <property type="protein sequence ID" value="YML018C"/>
    <property type="gene ID" value="YML018C"/>
</dbReference>
<dbReference type="GeneID" id="854990"/>
<dbReference type="KEGG" id="sce:YML018C"/>
<dbReference type="AGR" id="SGD:S000004480"/>
<dbReference type="SGD" id="S000004480">
    <property type="gene designation" value="YML018C"/>
</dbReference>
<dbReference type="VEuPathDB" id="FungiDB:YML018C"/>
<dbReference type="eggNOG" id="KOG2765">
    <property type="taxonomic scope" value="Eukaryota"/>
</dbReference>
<dbReference type="GeneTree" id="ENSGT00390000005949"/>
<dbReference type="HOGENOM" id="CLU_026578_1_0_1"/>
<dbReference type="InParanoid" id="Q03730"/>
<dbReference type="OMA" id="MYGVYTI"/>
<dbReference type="OrthoDB" id="1436450at2759"/>
<dbReference type="BioCyc" id="YEAST:G3O-32622-MONOMER"/>
<dbReference type="BioGRID-ORCS" id="854990">
    <property type="hits" value="1 hit in 10 CRISPR screens"/>
</dbReference>
<dbReference type="PRO" id="PR:Q03730"/>
<dbReference type="Proteomes" id="UP000002311">
    <property type="component" value="Chromosome XIII"/>
</dbReference>
<dbReference type="RNAct" id="Q03730">
    <property type="molecule type" value="protein"/>
</dbReference>
<dbReference type="GO" id="GO:0000329">
    <property type="term" value="C:fungal-type vacuole membrane"/>
    <property type="evidence" value="ECO:0007005"/>
    <property type="project" value="SGD"/>
</dbReference>
<dbReference type="PANTHER" id="PTHR23051:SF0">
    <property type="entry name" value="SOLUTE CARRIER FAMILY 35 MEMBER F5"/>
    <property type="match status" value="1"/>
</dbReference>
<dbReference type="PANTHER" id="PTHR23051">
    <property type="entry name" value="SOLUTE CARRIER FAMILY 35, MEMBER F5"/>
    <property type="match status" value="1"/>
</dbReference>
<dbReference type="SUPFAM" id="SSF103481">
    <property type="entry name" value="Multidrug resistance efflux transporter EmrE"/>
    <property type="match status" value="2"/>
</dbReference>
<reference key="1">
    <citation type="journal article" date="1997" name="Nature">
        <title>The nucleotide sequence of Saccharomyces cerevisiae chromosome XIII.</title>
        <authorList>
            <person name="Bowman S."/>
            <person name="Churcher C.M."/>
            <person name="Badcock K."/>
            <person name="Brown D."/>
            <person name="Chillingworth T."/>
            <person name="Connor R."/>
            <person name="Dedman K."/>
            <person name="Devlin K."/>
            <person name="Gentles S."/>
            <person name="Hamlin N."/>
            <person name="Hunt S."/>
            <person name="Jagels K."/>
            <person name="Lye G."/>
            <person name="Moule S."/>
            <person name="Odell C."/>
            <person name="Pearson D."/>
            <person name="Rajandream M.A."/>
            <person name="Rice P."/>
            <person name="Skelton J."/>
            <person name="Walsh S.V."/>
            <person name="Whitehead S."/>
            <person name="Barrell B.G."/>
        </authorList>
    </citation>
    <scope>NUCLEOTIDE SEQUENCE [LARGE SCALE GENOMIC DNA]</scope>
    <source>
        <strain>ATCC 204508 / S288c</strain>
    </source>
</reference>
<reference key="2">
    <citation type="journal article" date="2014" name="G3 (Bethesda)">
        <title>The reference genome sequence of Saccharomyces cerevisiae: Then and now.</title>
        <authorList>
            <person name="Engel S.R."/>
            <person name="Dietrich F.S."/>
            <person name="Fisk D.G."/>
            <person name="Binkley G."/>
            <person name="Balakrishnan R."/>
            <person name="Costanzo M.C."/>
            <person name="Dwight S.S."/>
            <person name="Hitz B.C."/>
            <person name="Karra K."/>
            <person name="Nash R.S."/>
            <person name="Weng S."/>
            <person name="Wong E.D."/>
            <person name="Lloyd P."/>
            <person name="Skrzypek M.S."/>
            <person name="Miyasato S.R."/>
            <person name="Simison M."/>
            <person name="Cherry J.M."/>
        </authorList>
    </citation>
    <scope>GENOME REANNOTATION</scope>
    <source>
        <strain>ATCC 204508 / S288c</strain>
    </source>
</reference>
<reference key="3">
    <citation type="journal article" date="2007" name="Genome Res.">
        <title>Approaching a complete repository of sequence-verified protein-encoding clones for Saccharomyces cerevisiae.</title>
        <authorList>
            <person name="Hu Y."/>
            <person name="Rolfs A."/>
            <person name="Bhullar B."/>
            <person name="Murthy T.V.S."/>
            <person name="Zhu C."/>
            <person name="Berger M.F."/>
            <person name="Camargo A.A."/>
            <person name="Kelley F."/>
            <person name="McCarron S."/>
            <person name="Jepson D."/>
            <person name="Richardson A."/>
            <person name="Raphael J."/>
            <person name="Moreira D."/>
            <person name="Taycher E."/>
            <person name="Zuo D."/>
            <person name="Mohr S."/>
            <person name="Kane M.F."/>
            <person name="Williamson J."/>
            <person name="Simpson A.J.G."/>
            <person name="Bulyk M.L."/>
            <person name="Harlow E."/>
            <person name="Marsischky G."/>
            <person name="Kolodner R.D."/>
            <person name="LaBaer J."/>
        </authorList>
    </citation>
    <scope>NUCLEOTIDE SEQUENCE [GENOMIC DNA]</scope>
    <source>
        <strain>ATCC 204508 / S288c</strain>
    </source>
</reference>
<reference key="4">
    <citation type="journal article" date="2003" name="Nature">
        <title>Global analysis of protein localization in budding yeast.</title>
        <authorList>
            <person name="Huh W.-K."/>
            <person name="Falvo J.V."/>
            <person name="Gerke L.C."/>
            <person name="Carroll A.S."/>
            <person name="Howson R.W."/>
            <person name="Weissman J.S."/>
            <person name="O'Shea E.K."/>
        </authorList>
    </citation>
    <scope>SUBCELLULAR LOCATION [LARGE SCALE ANALYSIS]</scope>
</reference>
<reference key="5">
    <citation type="journal article" date="2003" name="Nature">
        <title>Global analysis of protein expression in yeast.</title>
        <authorList>
            <person name="Ghaemmaghami S."/>
            <person name="Huh W.-K."/>
            <person name="Bower K."/>
            <person name="Howson R.W."/>
            <person name="Belle A."/>
            <person name="Dephoure N."/>
            <person name="O'Shea E.K."/>
            <person name="Weissman J.S."/>
        </authorList>
    </citation>
    <scope>LEVEL OF PROTEIN EXPRESSION [LARGE SCALE ANALYSIS]</scope>
</reference>
<reference key="6">
    <citation type="journal article" date="2006" name="Proc. Natl. Acad. Sci. U.S.A.">
        <title>A global topology map of the Saccharomyces cerevisiae membrane proteome.</title>
        <authorList>
            <person name="Kim H."/>
            <person name="Melen K."/>
            <person name="Oesterberg M."/>
            <person name="von Heijne G."/>
        </authorList>
    </citation>
    <scope>TOPOLOGY [LARGE SCALE ANALYSIS]</scope>
    <source>
        <strain>ATCC 208353 / W303-1A</strain>
    </source>
</reference>
<reference key="7">
    <citation type="journal article" date="2007" name="J. Proteome Res.">
        <title>Large-scale phosphorylation analysis of alpha-factor-arrested Saccharomyces cerevisiae.</title>
        <authorList>
            <person name="Li X."/>
            <person name="Gerber S.A."/>
            <person name="Rudner A.D."/>
            <person name="Beausoleil S.A."/>
            <person name="Haas W."/>
            <person name="Villen J."/>
            <person name="Elias J.E."/>
            <person name="Gygi S.P."/>
        </authorList>
    </citation>
    <scope>PHOSPHORYLATION [LARGE SCALE ANALYSIS] AT SER-93</scope>
    <scope>IDENTIFICATION BY MASS SPECTROMETRY [LARGE SCALE ANALYSIS]</scope>
    <source>
        <strain>ADR376</strain>
    </source>
</reference>
<reference key="8">
    <citation type="journal article" date="2008" name="Mol. Cell. Proteomics">
        <title>A multidimensional chromatography technology for in-depth phosphoproteome analysis.</title>
        <authorList>
            <person name="Albuquerque C.P."/>
            <person name="Smolka M.B."/>
            <person name="Payne S.H."/>
            <person name="Bafna V."/>
            <person name="Eng J."/>
            <person name="Zhou H."/>
        </authorList>
    </citation>
    <scope>IDENTIFICATION BY MASS SPECTROMETRY [LARGE SCALE ANALYSIS]</scope>
</reference>
<feature type="chain" id="PRO_0000203261" description="Uncharacterized vacuolar membrane protein YML018C">
    <location>
        <begin position="1"/>
        <end position="393"/>
    </location>
</feature>
<feature type="topological domain" description="Cytoplasmic" evidence="1">
    <location>
        <begin position="1"/>
        <end position="17"/>
    </location>
</feature>
<feature type="transmembrane region" description="Helical" evidence="1">
    <location>
        <begin position="18"/>
        <end position="38"/>
    </location>
</feature>
<feature type="topological domain" description="Vacuolar" evidence="1">
    <location>
        <begin position="39"/>
        <end position="46"/>
    </location>
</feature>
<feature type="transmembrane region" description="Helical" evidence="1">
    <location>
        <begin position="47"/>
        <end position="67"/>
    </location>
</feature>
<feature type="topological domain" description="Cytoplasmic" evidence="1">
    <location>
        <begin position="68"/>
        <end position="132"/>
    </location>
</feature>
<feature type="transmembrane region" description="Helical" evidence="1">
    <location>
        <begin position="133"/>
        <end position="153"/>
    </location>
</feature>
<feature type="topological domain" description="Vacuolar" evidence="1">
    <location>
        <begin position="154"/>
        <end position="156"/>
    </location>
</feature>
<feature type="transmembrane region" description="Helical" evidence="1">
    <location>
        <begin position="157"/>
        <end position="176"/>
    </location>
</feature>
<feature type="topological domain" description="Cytoplasmic" evidence="1">
    <location>
        <begin position="177"/>
        <end position="182"/>
    </location>
</feature>
<feature type="transmembrane region" description="Helical" evidence="1">
    <location>
        <begin position="183"/>
        <end position="200"/>
    </location>
</feature>
<feature type="topological domain" description="Vacuolar" evidence="1">
    <location>
        <begin position="201"/>
        <end position="219"/>
    </location>
</feature>
<feature type="transmembrane region" description="Helical" evidence="1">
    <location>
        <begin position="220"/>
        <end position="240"/>
    </location>
</feature>
<feature type="topological domain" description="Cytoplasmic" evidence="1">
    <location>
        <begin position="241"/>
        <end position="257"/>
    </location>
</feature>
<feature type="transmembrane region" description="Helical" evidence="1">
    <location>
        <begin position="258"/>
        <end position="278"/>
    </location>
</feature>
<feature type="topological domain" description="Vacuolar" evidence="1">
    <location>
        <begin position="279"/>
        <end position="292"/>
    </location>
</feature>
<feature type="transmembrane region" description="Helical" evidence="1">
    <location>
        <begin position="293"/>
        <end position="313"/>
    </location>
</feature>
<feature type="topological domain" description="Cytoplasmic" evidence="1">
    <location>
        <begin position="314"/>
        <end position="321"/>
    </location>
</feature>
<feature type="transmembrane region" description="Helical" evidence="1">
    <location>
        <begin position="322"/>
        <end position="342"/>
    </location>
</feature>
<feature type="topological domain" description="Vacuolar" evidence="1">
    <location>
        <begin position="343"/>
        <end position="345"/>
    </location>
</feature>
<feature type="transmembrane region" description="Helical" evidence="1">
    <location>
        <begin position="346"/>
        <end position="366"/>
    </location>
</feature>
<feature type="topological domain" description="Cytoplasmic" evidence="1">
    <location>
        <begin position="367"/>
        <end position="393"/>
    </location>
</feature>
<feature type="modified residue" description="Phosphoserine" evidence="5">
    <location>
        <position position="93"/>
    </location>
</feature>
<feature type="sequence conflict" description="In Ref. 3; AAT92742." evidence="4" ref="3">
    <original>K</original>
    <variation>R</variation>
    <location>
        <position position="257"/>
    </location>
</feature>
<keyword id="KW-0472">Membrane</keyword>
<keyword id="KW-0597">Phosphoprotein</keyword>
<keyword id="KW-1185">Reference proteome</keyword>
<keyword id="KW-0812">Transmembrane</keyword>
<keyword id="KW-1133">Transmembrane helix</keyword>
<keyword id="KW-0926">Vacuole</keyword>
<organism>
    <name type="scientific">Saccharomyces cerevisiae (strain ATCC 204508 / S288c)</name>
    <name type="common">Baker's yeast</name>
    <dbReference type="NCBI Taxonomy" id="559292"/>
    <lineage>
        <taxon>Eukaryota</taxon>
        <taxon>Fungi</taxon>
        <taxon>Dikarya</taxon>
        <taxon>Ascomycota</taxon>
        <taxon>Saccharomycotina</taxon>
        <taxon>Saccharomycetes</taxon>
        <taxon>Saccharomycetales</taxon>
        <taxon>Saccharomycetaceae</taxon>
        <taxon>Saccharomyces</taxon>
    </lineage>
</organism>
<comment type="subcellular location">
    <subcellularLocation>
        <location evidence="2">Vacuole membrane</location>
        <topology evidence="2">Multi-pass membrane protein</topology>
    </subcellularLocation>
</comment>
<comment type="miscellaneous">
    <text evidence="3">Present with 2010 molecules/cell in log phase SD medium.</text>
</comment>
<comment type="similarity">
    <text evidence="4">Belongs to the TPT transporter family.</text>
</comment>
<accession>Q03730</accession>
<accession>D6VZF6</accession>
<accession>Q6B2K7</accession>
<gene>
    <name type="ordered locus">YML018C</name>
</gene>
<sequence length="393" mass="43749">MVSKDQTSFNKRWTLGLLMLGLVIILWVLSSFLINLIFEDDSYRKPFFITYTNTAAFIFYLFPTAKAVVVNYKDTGRANVHRELIMEEEGTGSDSNRSVDMTSPLLTNLEAGTHANQKKRLTLYETIKLSAEFCILWFTANLVTNASLAFTSVASQTILSTTSSFFTLFIGAICHVESLSKSKVLGSFISFVGIIMVTKSDSHQRYQRHIADVSGDDNDAVQVLIGNLLALAGAVLYGVYSTLLKREVGDETRVNMKIFFGFVGLFNLLFLWPSLIVLDFFGWEPFSLPKDPKVVVIIFVNCLITFVSDFCWAKAMLLTSPLTVTVGLSITIPLAMFGDVIFKHKTMSALYLFGATLILGSFFIINKSSEEEHFENSITASNYESVEVPAANN</sequence>